<accession>Q6APZ9</accession>
<gene>
    <name evidence="1" type="primary">efp</name>
    <name type="ordered locus">DP0845</name>
</gene>
<dbReference type="EMBL" id="CR522870">
    <property type="protein sequence ID" value="CAG35574.1"/>
    <property type="molecule type" value="Genomic_DNA"/>
</dbReference>
<dbReference type="RefSeq" id="WP_011188090.1">
    <property type="nucleotide sequence ID" value="NC_006138.1"/>
</dbReference>
<dbReference type="SMR" id="Q6APZ9"/>
<dbReference type="STRING" id="177439.DP0845"/>
<dbReference type="KEGG" id="dps:DP0845"/>
<dbReference type="eggNOG" id="COG0231">
    <property type="taxonomic scope" value="Bacteria"/>
</dbReference>
<dbReference type="HOGENOM" id="CLU_074944_0_1_7"/>
<dbReference type="OrthoDB" id="9801844at2"/>
<dbReference type="UniPathway" id="UPA00345"/>
<dbReference type="Proteomes" id="UP000000602">
    <property type="component" value="Chromosome"/>
</dbReference>
<dbReference type="GO" id="GO:0005737">
    <property type="term" value="C:cytoplasm"/>
    <property type="evidence" value="ECO:0007669"/>
    <property type="project" value="UniProtKB-SubCell"/>
</dbReference>
<dbReference type="GO" id="GO:0003746">
    <property type="term" value="F:translation elongation factor activity"/>
    <property type="evidence" value="ECO:0007669"/>
    <property type="project" value="UniProtKB-UniRule"/>
</dbReference>
<dbReference type="GO" id="GO:0043043">
    <property type="term" value="P:peptide biosynthetic process"/>
    <property type="evidence" value="ECO:0007669"/>
    <property type="project" value="InterPro"/>
</dbReference>
<dbReference type="CDD" id="cd04470">
    <property type="entry name" value="S1_EF-P_repeat_1"/>
    <property type="match status" value="1"/>
</dbReference>
<dbReference type="CDD" id="cd05794">
    <property type="entry name" value="S1_EF-P_repeat_2"/>
    <property type="match status" value="1"/>
</dbReference>
<dbReference type="FunFam" id="2.30.30.30:FF:000003">
    <property type="entry name" value="Elongation factor P"/>
    <property type="match status" value="1"/>
</dbReference>
<dbReference type="FunFam" id="2.40.50.140:FF:000004">
    <property type="entry name" value="Elongation factor P"/>
    <property type="match status" value="1"/>
</dbReference>
<dbReference type="FunFam" id="2.40.50.140:FF:000009">
    <property type="entry name" value="Elongation factor P"/>
    <property type="match status" value="1"/>
</dbReference>
<dbReference type="Gene3D" id="2.30.30.30">
    <property type="match status" value="1"/>
</dbReference>
<dbReference type="Gene3D" id="2.40.50.140">
    <property type="entry name" value="Nucleic acid-binding proteins"/>
    <property type="match status" value="2"/>
</dbReference>
<dbReference type="HAMAP" id="MF_00141">
    <property type="entry name" value="EF_P"/>
    <property type="match status" value="1"/>
</dbReference>
<dbReference type="InterPro" id="IPR015365">
    <property type="entry name" value="Elong-fact-P_C"/>
</dbReference>
<dbReference type="InterPro" id="IPR012340">
    <property type="entry name" value="NA-bd_OB-fold"/>
</dbReference>
<dbReference type="InterPro" id="IPR014722">
    <property type="entry name" value="Rib_uL2_dom2"/>
</dbReference>
<dbReference type="InterPro" id="IPR020599">
    <property type="entry name" value="Transl_elong_fac_P/YeiP"/>
</dbReference>
<dbReference type="InterPro" id="IPR013185">
    <property type="entry name" value="Transl_elong_KOW-like"/>
</dbReference>
<dbReference type="InterPro" id="IPR001059">
    <property type="entry name" value="Transl_elong_P/YeiP_cen"/>
</dbReference>
<dbReference type="InterPro" id="IPR011768">
    <property type="entry name" value="Transl_elongation_fac_P"/>
</dbReference>
<dbReference type="InterPro" id="IPR008991">
    <property type="entry name" value="Translation_prot_SH3-like_sf"/>
</dbReference>
<dbReference type="NCBIfam" id="TIGR00038">
    <property type="entry name" value="efp"/>
    <property type="match status" value="1"/>
</dbReference>
<dbReference type="NCBIfam" id="NF001810">
    <property type="entry name" value="PRK00529.1"/>
    <property type="match status" value="1"/>
</dbReference>
<dbReference type="PANTHER" id="PTHR30053">
    <property type="entry name" value="ELONGATION FACTOR P"/>
    <property type="match status" value="1"/>
</dbReference>
<dbReference type="PANTHER" id="PTHR30053:SF12">
    <property type="entry name" value="ELONGATION FACTOR P (EF-P) FAMILY PROTEIN"/>
    <property type="match status" value="1"/>
</dbReference>
<dbReference type="Pfam" id="PF01132">
    <property type="entry name" value="EFP"/>
    <property type="match status" value="1"/>
</dbReference>
<dbReference type="Pfam" id="PF08207">
    <property type="entry name" value="EFP_N"/>
    <property type="match status" value="1"/>
</dbReference>
<dbReference type="Pfam" id="PF09285">
    <property type="entry name" value="Elong-fact-P_C"/>
    <property type="match status" value="1"/>
</dbReference>
<dbReference type="PIRSF" id="PIRSF005901">
    <property type="entry name" value="EF-P"/>
    <property type="match status" value="1"/>
</dbReference>
<dbReference type="SMART" id="SM01185">
    <property type="entry name" value="EFP"/>
    <property type="match status" value="1"/>
</dbReference>
<dbReference type="SMART" id="SM00841">
    <property type="entry name" value="Elong-fact-P_C"/>
    <property type="match status" value="1"/>
</dbReference>
<dbReference type="SUPFAM" id="SSF50249">
    <property type="entry name" value="Nucleic acid-binding proteins"/>
    <property type="match status" value="2"/>
</dbReference>
<dbReference type="SUPFAM" id="SSF50104">
    <property type="entry name" value="Translation proteins SH3-like domain"/>
    <property type="match status" value="1"/>
</dbReference>
<organism>
    <name type="scientific">Desulfotalea psychrophila (strain LSv54 / DSM 12343)</name>
    <dbReference type="NCBI Taxonomy" id="177439"/>
    <lineage>
        <taxon>Bacteria</taxon>
        <taxon>Pseudomonadati</taxon>
        <taxon>Thermodesulfobacteriota</taxon>
        <taxon>Desulfobulbia</taxon>
        <taxon>Desulfobulbales</taxon>
        <taxon>Desulfocapsaceae</taxon>
        <taxon>Desulfotalea</taxon>
    </lineage>
</organism>
<feature type="chain" id="PRO_0000094243" description="Elongation factor P">
    <location>
        <begin position="1"/>
        <end position="187"/>
    </location>
</feature>
<protein>
    <recommendedName>
        <fullName evidence="1">Elongation factor P</fullName>
        <shortName evidence="1">EF-P</shortName>
    </recommendedName>
</protein>
<evidence type="ECO:0000255" key="1">
    <source>
        <dbReference type="HAMAP-Rule" id="MF_00141"/>
    </source>
</evidence>
<keyword id="KW-0963">Cytoplasm</keyword>
<keyword id="KW-0251">Elongation factor</keyword>
<keyword id="KW-0648">Protein biosynthesis</keyword>
<keyword id="KW-1185">Reference proteome</keyword>
<reference key="1">
    <citation type="journal article" date="2004" name="Environ. Microbiol.">
        <title>The genome of Desulfotalea psychrophila, a sulfate-reducing bacterium from permanently cold Arctic sediments.</title>
        <authorList>
            <person name="Rabus R."/>
            <person name="Ruepp A."/>
            <person name="Frickey T."/>
            <person name="Rattei T."/>
            <person name="Fartmann B."/>
            <person name="Stark M."/>
            <person name="Bauer M."/>
            <person name="Zibat A."/>
            <person name="Lombardot T."/>
            <person name="Becker I."/>
            <person name="Amann J."/>
            <person name="Gellner K."/>
            <person name="Teeling H."/>
            <person name="Leuschner W.D."/>
            <person name="Gloeckner F.-O."/>
            <person name="Lupas A.N."/>
            <person name="Amann R."/>
            <person name="Klenk H.-P."/>
        </authorList>
    </citation>
    <scope>NUCLEOTIDE SEQUENCE [LARGE SCALE GENOMIC DNA]</scope>
    <source>
        <strain>DSM 12343 / LSv54</strain>
    </source>
</reference>
<proteinExistence type="inferred from homology"/>
<comment type="function">
    <text evidence="1">Involved in peptide bond synthesis. Stimulates efficient translation and peptide-bond synthesis on native or reconstituted 70S ribosomes in vitro. Probably functions indirectly by altering the affinity of the ribosome for aminoacyl-tRNA, thus increasing their reactivity as acceptors for peptidyl transferase.</text>
</comment>
<comment type="pathway">
    <text evidence="1">Protein biosynthesis; polypeptide chain elongation.</text>
</comment>
<comment type="subcellular location">
    <subcellularLocation>
        <location evidence="1">Cytoplasm</location>
    </subcellularLocation>
</comment>
<comment type="similarity">
    <text evidence="1">Belongs to the elongation factor P family.</text>
</comment>
<name>EFP_DESPS</name>
<sequence>MLSASDLRKGLKLDIEGSPYIIIDFDFSKPGKGQALYRCKMRNMITGNQLVKTYRSSDKFEKASLEERKMQFLYSQGEEYHFMDNENYDQLFITKDMLGDNIYFLQDNMDVDVLFFDEKPIDITLPIFVNLEVTRADPWVKGDTSGTDTKPITVETGYQLQVPPFVEQGDKIQIDTRTGQYVTRVKQ</sequence>